<name>VG301_BPPF3</name>
<organismHost>
    <name type="scientific">Pseudomonas aeruginosa</name>
    <dbReference type="NCBI Taxonomy" id="287"/>
</organismHost>
<protein>
    <recommendedName>
        <fullName>Putative assembly protein ORF301</fullName>
    </recommendedName>
    <alternativeName>
        <fullName>ORF301</fullName>
    </alternativeName>
</protein>
<accession>P03626</accession>
<comment type="function">
    <text>May play a role in phage assembly.</text>
</comment>
<comment type="subcellular location">
    <subcellularLocation>
        <location evidence="2">Host membrane</location>
        <topology evidence="2">Single-pass membrane protein</topology>
    </subcellularLocation>
</comment>
<comment type="miscellaneous">
    <text>The strain Nijmegen sequence is shown.</text>
</comment>
<reference key="1">
    <citation type="journal article" date="1985" name="J. Virol.">
        <title>Nucleotide sequence of the genome of Pf3, an IncP-1 plasmid-specific filamentous bacteriophage of Pseudomonas aeruginosa.</title>
        <authorList>
            <person name="Luiten R.G.M."/>
            <person name="Putterman D.G."/>
            <person name="Schoenmakers J.G.G."/>
            <person name="Konings R.N.H."/>
            <person name="Day L.A."/>
        </authorList>
    </citation>
    <scope>NUCLEOTIDE SEQUENCE [GENOMIC DNA]</scope>
    <source>
        <strain>New York</strain>
        <strain>Nijmegen</strain>
    </source>
</reference>
<proteinExistence type="predicted"/>
<sequence>MITLITAVPGSGKTLYAIGLIEAALSEGRPVFTNISGLVKDKFSNPHLLSDAPDDWRDTPEGSLVVYDEAQQAHLYPSNAQRGPVTDERLTAMETHRHTGHDLVFITQAPTFVHHHIRKLVGLHIHLYRSRGLQAASKYEWSHVCDSPNDRKEQQRADFVLWKFPKEHFAFYTSAVMHTHKFKMPKKIGVLLVFVVLGLGAVGFNLYKNSGLASMAEATASVAEATPSPLALNGVKPSSLAAPYQWSAAAPAVPVSGCVANRSTNRCQCFDASGVVLAIEHAACLSVISSPLPRQLLSTSK</sequence>
<keyword id="KW-0067">ATP-binding</keyword>
<keyword id="KW-1043">Host membrane</keyword>
<keyword id="KW-0472">Membrane</keyword>
<keyword id="KW-0547">Nucleotide-binding</keyword>
<keyword id="KW-1185">Reference proteome</keyword>
<keyword id="KW-0812">Transmembrane</keyword>
<keyword id="KW-1133">Transmembrane helix</keyword>
<dbReference type="EMBL" id="M11912">
    <property type="protein sequence ID" value="AAA88382.1"/>
    <property type="molecule type" value="Genomic_DNA"/>
</dbReference>
<dbReference type="EMBL" id="M19377">
    <property type="protein sequence ID" value="AAA88391.1"/>
    <property type="molecule type" value="Genomic_DNA"/>
</dbReference>
<dbReference type="PIR" id="A04234">
    <property type="entry name" value="Z3BP13"/>
</dbReference>
<dbReference type="RefSeq" id="NP_040656.1">
    <property type="nucleotide sequence ID" value="NC_001418.1"/>
</dbReference>
<dbReference type="SMR" id="P03626"/>
<dbReference type="TCDB" id="8.A.23.1.47">
    <property type="family name" value="the basigin (basigin) family"/>
</dbReference>
<dbReference type="GeneID" id="1260910"/>
<dbReference type="KEGG" id="vg:1260910"/>
<dbReference type="OrthoDB" id="24138at10239"/>
<dbReference type="Proteomes" id="UP000001719">
    <property type="component" value="Genome"/>
</dbReference>
<dbReference type="Proteomes" id="UP000009090">
    <property type="component" value="Genome"/>
</dbReference>
<dbReference type="GO" id="GO:0033644">
    <property type="term" value="C:host cell membrane"/>
    <property type="evidence" value="ECO:0007669"/>
    <property type="project" value="UniProtKB-SubCell"/>
</dbReference>
<dbReference type="GO" id="GO:0016020">
    <property type="term" value="C:membrane"/>
    <property type="evidence" value="ECO:0007669"/>
    <property type="project" value="UniProtKB-KW"/>
</dbReference>
<dbReference type="GO" id="GO:0005524">
    <property type="term" value="F:ATP binding"/>
    <property type="evidence" value="ECO:0007669"/>
    <property type="project" value="UniProtKB-KW"/>
</dbReference>
<dbReference type="Gene3D" id="3.40.50.300">
    <property type="entry name" value="P-loop containing nucleotide triphosphate hydrolases"/>
    <property type="match status" value="1"/>
</dbReference>
<dbReference type="InterPro" id="IPR027417">
    <property type="entry name" value="P-loop_NTPase"/>
</dbReference>
<dbReference type="InterPro" id="IPR008900">
    <property type="entry name" value="Zot_N"/>
</dbReference>
<dbReference type="Pfam" id="PF05707">
    <property type="entry name" value="Zot"/>
    <property type="match status" value="1"/>
</dbReference>
<dbReference type="SUPFAM" id="SSF52540">
    <property type="entry name" value="P-loop containing nucleoside triphosphate hydrolases"/>
    <property type="match status" value="1"/>
</dbReference>
<organism>
    <name type="scientific">Pseudomonas phage Pf3</name>
    <name type="common">Bacteriophage Pf3</name>
    <dbReference type="NCBI Taxonomy" id="10872"/>
    <lineage>
        <taxon>Viruses</taxon>
        <taxon>Monodnaviria</taxon>
        <taxon>Loebvirae</taxon>
        <taxon>Hofneiviricota</taxon>
        <taxon>Faserviricetes</taxon>
        <taxon>Tubulavirales</taxon>
        <taxon>Inoviridae</taxon>
        <taxon>Tertilicivirus</taxon>
        <taxon>Tertilicivirus Pf3</taxon>
    </lineage>
</organism>
<feature type="chain" id="PRO_0000098211" description="Putative assembly protein ORF301">
    <location>
        <begin position="1"/>
        <end position="301"/>
    </location>
</feature>
<feature type="transmembrane region" description="Helical" evidence="1">
    <location>
        <begin position="187"/>
        <end position="207"/>
    </location>
</feature>
<feature type="binding site" evidence="1">
    <location>
        <begin position="7"/>
        <end position="14"/>
    </location>
    <ligand>
        <name>ATP</name>
        <dbReference type="ChEBI" id="CHEBI:30616"/>
    </ligand>
</feature>
<feature type="sequence variant" description="In strain: New York.">
    <original>P</original>
    <variation>L</variation>
    <location>
        <position position="77"/>
    </location>
</feature>
<evidence type="ECO:0000255" key="1"/>
<evidence type="ECO:0000305" key="2"/>